<keyword id="KW-0002">3D-structure</keyword>
<keyword id="KW-0007">Acetylation</keyword>
<keyword id="KW-0067">ATP-binding</keyword>
<keyword id="KW-0963">Cytoplasm</keyword>
<keyword id="KW-0225">Disease variant</keyword>
<keyword id="KW-0347">Helicase</keyword>
<keyword id="KW-0378">Hydrolase</keyword>
<keyword id="KW-1017">Isopeptide bond</keyword>
<keyword id="KW-0479">Metal-binding</keyword>
<keyword id="KW-0507">mRNA processing</keyword>
<keyword id="KW-0508">mRNA splicing</keyword>
<keyword id="KW-0547">Nucleotide-binding</keyword>
<keyword id="KW-0539">Nucleus</keyword>
<keyword id="KW-0597">Phosphoprotein</keyword>
<keyword id="KW-1267">Proteomics identification</keyword>
<keyword id="KW-1185">Reference proteome</keyword>
<keyword id="KW-0694">RNA-binding</keyword>
<keyword id="KW-0747">Spliceosome</keyword>
<keyword id="KW-0832">Ubl conjugation</keyword>
<keyword id="KW-0862">Zinc</keyword>
<keyword id="KW-0863">Zinc-finger</keyword>
<reference key="1">
    <citation type="journal article" date="1999" name="Curr. Biol.">
        <title>Developmental and cell biological functions of the Drosophila DEAD-box protein abstrakt.</title>
        <authorList>
            <person name="Irion U."/>
            <person name="Leptin M."/>
        </authorList>
    </citation>
    <scope>NUCLEOTIDE SEQUENCE [MRNA]</scope>
</reference>
<reference key="2">
    <citation type="journal article" date="2004" name="Nat. Genet.">
        <title>Complete sequencing and characterization of 21,243 full-length human cDNAs.</title>
        <authorList>
            <person name="Ota T."/>
            <person name="Suzuki Y."/>
            <person name="Nishikawa T."/>
            <person name="Otsuki T."/>
            <person name="Sugiyama T."/>
            <person name="Irie R."/>
            <person name="Wakamatsu A."/>
            <person name="Hayashi K."/>
            <person name="Sato H."/>
            <person name="Nagai K."/>
            <person name="Kimura K."/>
            <person name="Makita H."/>
            <person name="Sekine M."/>
            <person name="Obayashi M."/>
            <person name="Nishi T."/>
            <person name="Shibahara T."/>
            <person name="Tanaka T."/>
            <person name="Ishii S."/>
            <person name="Yamamoto J."/>
            <person name="Saito K."/>
            <person name="Kawai Y."/>
            <person name="Isono Y."/>
            <person name="Nakamura Y."/>
            <person name="Nagahari K."/>
            <person name="Murakami K."/>
            <person name="Yasuda T."/>
            <person name="Iwayanagi T."/>
            <person name="Wagatsuma M."/>
            <person name="Shiratori A."/>
            <person name="Sudo H."/>
            <person name="Hosoiri T."/>
            <person name="Kaku Y."/>
            <person name="Kodaira H."/>
            <person name="Kondo H."/>
            <person name="Sugawara M."/>
            <person name="Takahashi M."/>
            <person name="Kanda K."/>
            <person name="Yokoi T."/>
            <person name="Furuya T."/>
            <person name="Kikkawa E."/>
            <person name="Omura Y."/>
            <person name="Abe K."/>
            <person name="Kamihara K."/>
            <person name="Katsuta N."/>
            <person name="Sato K."/>
            <person name="Tanikawa M."/>
            <person name="Yamazaki M."/>
            <person name="Ninomiya K."/>
            <person name="Ishibashi T."/>
            <person name="Yamashita H."/>
            <person name="Murakawa K."/>
            <person name="Fujimori K."/>
            <person name="Tanai H."/>
            <person name="Kimata M."/>
            <person name="Watanabe M."/>
            <person name="Hiraoka S."/>
            <person name="Chiba Y."/>
            <person name="Ishida S."/>
            <person name="Ono Y."/>
            <person name="Takiguchi S."/>
            <person name="Watanabe S."/>
            <person name="Yosida M."/>
            <person name="Hotuta T."/>
            <person name="Kusano J."/>
            <person name="Kanehori K."/>
            <person name="Takahashi-Fujii A."/>
            <person name="Hara H."/>
            <person name="Tanase T.-O."/>
            <person name="Nomura Y."/>
            <person name="Togiya S."/>
            <person name="Komai F."/>
            <person name="Hara R."/>
            <person name="Takeuchi K."/>
            <person name="Arita M."/>
            <person name="Imose N."/>
            <person name="Musashino K."/>
            <person name="Yuuki H."/>
            <person name="Oshima A."/>
            <person name="Sasaki N."/>
            <person name="Aotsuka S."/>
            <person name="Yoshikawa Y."/>
            <person name="Matsunawa H."/>
            <person name="Ichihara T."/>
            <person name="Shiohata N."/>
            <person name="Sano S."/>
            <person name="Moriya S."/>
            <person name="Momiyama H."/>
            <person name="Satoh N."/>
            <person name="Takami S."/>
            <person name="Terashima Y."/>
            <person name="Suzuki O."/>
            <person name="Nakagawa S."/>
            <person name="Senoh A."/>
            <person name="Mizoguchi H."/>
            <person name="Goto Y."/>
            <person name="Shimizu F."/>
            <person name="Wakebe H."/>
            <person name="Hishigaki H."/>
            <person name="Watanabe T."/>
            <person name="Sugiyama A."/>
            <person name="Takemoto M."/>
            <person name="Kawakami B."/>
            <person name="Yamazaki M."/>
            <person name="Watanabe K."/>
            <person name="Kumagai A."/>
            <person name="Itakura S."/>
            <person name="Fukuzumi Y."/>
            <person name="Fujimori Y."/>
            <person name="Komiyama M."/>
            <person name="Tashiro H."/>
            <person name="Tanigami A."/>
            <person name="Fujiwara T."/>
            <person name="Ono T."/>
            <person name="Yamada K."/>
            <person name="Fujii Y."/>
            <person name="Ozaki K."/>
            <person name="Hirao M."/>
            <person name="Ohmori Y."/>
            <person name="Kawabata A."/>
            <person name="Hikiji T."/>
            <person name="Kobatake N."/>
            <person name="Inagaki H."/>
            <person name="Ikema Y."/>
            <person name="Okamoto S."/>
            <person name="Okitani R."/>
            <person name="Kawakami T."/>
            <person name="Noguchi S."/>
            <person name="Itoh T."/>
            <person name="Shigeta K."/>
            <person name="Senba T."/>
            <person name="Matsumura K."/>
            <person name="Nakajima Y."/>
            <person name="Mizuno T."/>
            <person name="Morinaga M."/>
            <person name="Sasaki M."/>
            <person name="Togashi T."/>
            <person name="Oyama M."/>
            <person name="Hata H."/>
            <person name="Watanabe M."/>
            <person name="Komatsu T."/>
            <person name="Mizushima-Sugano J."/>
            <person name="Satoh T."/>
            <person name="Shirai Y."/>
            <person name="Takahashi Y."/>
            <person name="Nakagawa K."/>
            <person name="Okumura K."/>
            <person name="Nagase T."/>
            <person name="Nomura N."/>
            <person name="Kikuchi H."/>
            <person name="Masuho Y."/>
            <person name="Yamashita R."/>
            <person name="Nakai K."/>
            <person name="Yada T."/>
            <person name="Nakamura Y."/>
            <person name="Ohara O."/>
            <person name="Isogai T."/>
            <person name="Sugano S."/>
        </authorList>
    </citation>
    <scope>NUCLEOTIDE SEQUENCE [LARGE SCALE MRNA]</scope>
    <source>
        <tissue>Placenta</tissue>
    </source>
</reference>
<reference key="3">
    <citation type="submission" date="2005-07" db="EMBL/GenBank/DDBJ databases">
        <authorList>
            <person name="Mural R.J."/>
            <person name="Istrail S."/>
            <person name="Sutton G.G."/>
            <person name="Florea L."/>
            <person name="Halpern A.L."/>
            <person name="Mobarry C.M."/>
            <person name="Lippert R."/>
            <person name="Walenz B."/>
            <person name="Shatkay H."/>
            <person name="Dew I."/>
            <person name="Miller J.R."/>
            <person name="Flanigan M.J."/>
            <person name="Edwards N.J."/>
            <person name="Bolanos R."/>
            <person name="Fasulo D."/>
            <person name="Halldorsson B.V."/>
            <person name="Hannenhalli S."/>
            <person name="Turner R."/>
            <person name="Yooseph S."/>
            <person name="Lu F."/>
            <person name="Nusskern D.R."/>
            <person name="Shue B.C."/>
            <person name="Zheng X.H."/>
            <person name="Zhong F."/>
            <person name="Delcher A.L."/>
            <person name="Huson D.H."/>
            <person name="Kravitz S.A."/>
            <person name="Mouchard L."/>
            <person name="Reinert K."/>
            <person name="Remington K.A."/>
            <person name="Clark A.G."/>
            <person name="Waterman M.S."/>
            <person name="Eichler E.E."/>
            <person name="Adams M.D."/>
            <person name="Hunkapiller M.W."/>
            <person name="Myers E.W."/>
            <person name="Venter J.C."/>
        </authorList>
    </citation>
    <scope>NUCLEOTIDE SEQUENCE [LARGE SCALE GENOMIC DNA]</scope>
</reference>
<reference key="4">
    <citation type="journal article" date="2004" name="Genome Res.">
        <title>The status, quality, and expansion of the NIH full-length cDNA project: the Mammalian Gene Collection (MGC).</title>
        <authorList>
            <consortium name="The MGC Project Team"/>
        </authorList>
    </citation>
    <scope>NUCLEOTIDE SEQUENCE [LARGE SCALE MRNA]</scope>
    <source>
        <tissue>Skin</tissue>
    </source>
</reference>
<reference key="5">
    <citation type="journal article" date="2007" name="BMC Genomics">
        <title>The full-ORF clone resource of the German cDNA consortium.</title>
        <authorList>
            <person name="Bechtel S."/>
            <person name="Rosenfelder H."/>
            <person name="Duda A."/>
            <person name="Schmidt C.P."/>
            <person name="Ernst U."/>
            <person name="Wellenreuther R."/>
            <person name="Mehrle A."/>
            <person name="Schuster C."/>
            <person name="Bahr A."/>
            <person name="Bloecker H."/>
            <person name="Heubner D."/>
            <person name="Hoerlein A."/>
            <person name="Michel G."/>
            <person name="Wedler H."/>
            <person name="Koehrer K."/>
            <person name="Ottenwaelder B."/>
            <person name="Poustka A."/>
            <person name="Wiemann S."/>
            <person name="Schupp I."/>
        </authorList>
    </citation>
    <scope>NUCLEOTIDE SEQUENCE [LARGE SCALE MRNA] OF 47-622</scope>
    <source>
        <tissue>Amygdala</tissue>
    </source>
</reference>
<reference key="6">
    <citation type="journal article" date="2002" name="RNA">
        <title>Purification and characterization of native spliceosomes suitable for three-dimensional structural analysis.</title>
        <authorList>
            <person name="Jurica M.S."/>
            <person name="Licklider L.J."/>
            <person name="Gygi S.P."/>
            <person name="Grigorieff N."/>
            <person name="Moore M.J."/>
        </authorList>
    </citation>
    <scope>IDENTIFICATION BY MASS SPECTROMETRY</scope>
    <scope>IDENTIFICATION IN THE SPLICEOSOMAL C COMPLEX</scope>
</reference>
<reference key="7">
    <citation type="journal article" date="2008" name="J. Proteome Res.">
        <title>Combining protein-based IMAC, peptide-based IMAC, and MudPIT for efficient phosphoproteomic analysis.</title>
        <authorList>
            <person name="Cantin G.T."/>
            <person name="Yi W."/>
            <person name="Lu B."/>
            <person name="Park S.K."/>
            <person name="Xu T."/>
            <person name="Lee J.-D."/>
            <person name="Yates J.R. III"/>
        </authorList>
    </citation>
    <scope>IDENTIFICATION BY MASS SPECTROMETRY [LARGE SCALE ANALYSIS]</scope>
    <source>
        <tissue>Cervix carcinoma</tissue>
    </source>
</reference>
<reference key="8">
    <citation type="journal article" date="2008" name="Proc. Natl. Acad. Sci. U.S.A.">
        <title>A quantitative atlas of mitotic phosphorylation.</title>
        <authorList>
            <person name="Dephoure N."/>
            <person name="Zhou C."/>
            <person name="Villen J."/>
            <person name="Beausoleil S.A."/>
            <person name="Bakalarski C.E."/>
            <person name="Elledge S.J."/>
            <person name="Gygi S.P."/>
        </authorList>
    </citation>
    <scope>PHOSPHORYLATION [LARGE SCALE ANALYSIS] AT SER-21 AND SER-23</scope>
    <scope>IDENTIFICATION BY MASS SPECTROMETRY [LARGE SCALE ANALYSIS]</scope>
    <source>
        <tissue>Cervix carcinoma</tissue>
    </source>
</reference>
<reference key="9">
    <citation type="journal article" date="2009" name="Sci. Signal.">
        <title>Quantitative phosphoproteomic analysis of T cell receptor signaling reveals system-wide modulation of protein-protein interactions.</title>
        <authorList>
            <person name="Mayya V."/>
            <person name="Lundgren D.H."/>
            <person name="Hwang S.-I."/>
            <person name="Rezaul K."/>
            <person name="Wu L."/>
            <person name="Eng J.K."/>
            <person name="Rodionov V."/>
            <person name="Han D.K."/>
        </authorList>
    </citation>
    <scope>PHOSPHORYLATION [LARGE SCALE ANALYSIS] AT SER-21 AND SER-23</scope>
    <scope>IDENTIFICATION BY MASS SPECTROMETRY [LARGE SCALE ANALYSIS]</scope>
    <source>
        <tissue>Leukemic T-cell</tissue>
    </source>
</reference>
<reference key="10">
    <citation type="journal article" date="2010" name="Sci. Signal.">
        <title>Quantitative phosphoproteomics reveals widespread full phosphorylation site occupancy during mitosis.</title>
        <authorList>
            <person name="Olsen J.V."/>
            <person name="Vermeulen M."/>
            <person name="Santamaria A."/>
            <person name="Kumar C."/>
            <person name="Miller M.L."/>
            <person name="Jensen L.J."/>
            <person name="Gnad F."/>
            <person name="Cox J."/>
            <person name="Jensen T.S."/>
            <person name="Nigg E.A."/>
            <person name="Brunak S."/>
            <person name="Mann M."/>
        </authorList>
    </citation>
    <scope>PHOSPHORYLATION [LARGE SCALE ANALYSIS] AT SER-23</scope>
    <scope>IDENTIFICATION BY MASS SPECTROMETRY [LARGE SCALE ANALYSIS]</scope>
    <source>
        <tissue>Cervix carcinoma</tissue>
    </source>
</reference>
<reference key="11">
    <citation type="journal article" date="2011" name="BMC Syst. Biol.">
        <title>Initial characterization of the human central proteome.</title>
        <authorList>
            <person name="Burkard T.R."/>
            <person name="Planyavsky M."/>
            <person name="Kaupe I."/>
            <person name="Breitwieser F.P."/>
            <person name="Buerckstuemmer T."/>
            <person name="Bennett K.L."/>
            <person name="Superti-Furga G."/>
            <person name="Colinge J."/>
        </authorList>
    </citation>
    <scope>IDENTIFICATION BY MASS SPECTROMETRY [LARGE SCALE ANALYSIS]</scope>
</reference>
<reference key="12">
    <citation type="journal article" date="2011" name="Sci. Signal.">
        <title>System-wide temporal characterization of the proteome and phosphoproteome of human embryonic stem cell differentiation.</title>
        <authorList>
            <person name="Rigbolt K.T."/>
            <person name="Prokhorova T.A."/>
            <person name="Akimov V."/>
            <person name="Henningsen J."/>
            <person name="Johansen P.T."/>
            <person name="Kratchmarova I."/>
            <person name="Kassem M."/>
            <person name="Mann M."/>
            <person name="Olsen J.V."/>
            <person name="Blagoev B."/>
        </authorList>
    </citation>
    <scope>IDENTIFICATION BY MASS SPECTROMETRY [LARGE SCALE ANALYSIS]</scope>
</reference>
<reference key="13">
    <citation type="journal article" date="2013" name="J. Proteome Res.">
        <title>Toward a comprehensive characterization of a human cancer cell phosphoproteome.</title>
        <authorList>
            <person name="Zhou H."/>
            <person name="Di Palma S."/>
            <person name="Preisinger C."/>
            <person name="Peng M."/>
            <person name="Polat A.N."/>
            <person name="Heck A.J."/>
            <person name="Mohammed S."/>
        </authorList>
    </citation>
    <scope>PHOSPHORYLATION [LARGE SCALE ANALYSIS] AT SER-4; SER-21 AND SER-23</scope>
    <scope>IDENTIFICATION BY MASS SPECTROMETRY [LARGE SCALE ANALYSIS]</scope>
    <source>
        <tissue>Cervix carcinoma</tissue>
        <tissue>Erythroleukemia</tissue>
    </source>
</reference>
<reference key="14">
    <citation type="journal article" date="2013" name="Nat. Immunol.">
        <title>The E3 ubiquitin ligase TRIM21 negatively regulates the innate immune response to intracellular double-stranded DNA.</title>
        <authorList>
            <person name="Zhang Z."/>
            <person name="Bao M."/>
            <person name="Lu N."/>
            <person name="Weng L."/>
            <person name="Yuan B."/>
            <person name="Liu Y.J."/>
        </authorList>
    </citation>
    <scope>FUNCTION</scope>
    <scope>UBIQUITINATION BY TRIM21</scope>
    <scope>SUBCELLULAR LOCATION</scope>
    <scope>MUTAGENESIS OF LYS-9 AND LYS-115</scope>
</reference>
<reference key="15">
    <citation type="journal article" date="2014" name="J. Proteomics">
        <title>An enzyme assisted RP-RPLC approach for in-depth analysis of human liver phosphoproteome.</title>
        <authorList>
            <person name="Bian Y."/>
            <person name="Song C."/>
            <person name="Cheng K."/>
            <person name="Dong M."/>
            <person name="Wang F."/>
            <person name="Huang J."/>
            <person name="Sun D."/>
            <person name="Wang L."/>
            <person name="Ye M."/>
            <person name="Zou H."/>
        </authorList>
    </citation>
    <scope>IDENTIFICATION BY MASS SPECTROMETRY [LARGE SCALE ANALYSIS]</scope>
    <source>
        <tissue>Liver</tissue>
    </source>
</reference>
<reference key="16">
    <citation type="journal article" date="2015" name="Cell Rep.">
        <title>Bruton's tyrosine kinase phosphorylates DDX41 and activates its binding of dsDNA and STING to initiate type 1 interferon response.</title>
        <authorList>
            <person name="Lee K.G."/>
            <person name="Kim S.S."/>
            <person name="Kui L."/>
            <person name="Voon D.C."/>
            <person name="Mauduit M."/>
            <person name="Bist P."/>
            <person name="Bi X."/>
            <person name="Pereira N.A."/>
            <person name="Liu C."/>
            <person name="Sukumaran B."/>
            <person name="Renia L."/>
            <person name="Ito Y."/>
            <person name="Lam K.P."/>
        </authorList>
    </citation>
    <scope>FUNCTION</scope>
    <scope>PHOSPHORYLATION AT TYR-414</scope>
    <scope>SUBCELLULAR LOCATION</scope>
    <scope>MUTAGENESIS OF TYR-364 AND TYR-414</scope>
    <scope>INTERACTION WITH STING1</scope>
</reference>
<reference key="17">
    <citation type="journal article" date="2015" name="Cancer Cell">
        <title>Inherited and Somatic Defects in DDX41 in Myeloid Neoplasms.</title>
        <authorList>
            <person name="Polprasert C."/>
            <person name="Schulze I."/>
            <person name="Sekeres M.A."/>
            <person name="Makishima H."/>
            <person name="Przychodzen B."/>
            <person name="Hosono N."/>
            <person name="Singh J."/>
            <person name="Padgett R.A."/>
            <person name="Gu X."/>
            <person name="Phillips J.G."/>
            <person name="Clemente M."/>
            <person name="Parker Y."/>
            <person name="Lindner D."/>
            <person name="Dienes B."/>
            <person name="Jankowsky E."/>
            <person name="Saunthararajah Y."/>
            <person name="Du Y."/>
            <person name="Oakley K."/>
            <person name="Nguyen N."/>
            <person name="Mukherjee S."/>
            <person name="Pabst C."/>
            <person name="Godley L.A."/>
            <person name="Churpek J.E."/>
            <person name="Pollyea D.A."/>
            <person name="Krug U."/>
            <person name="Berdel W.E."/>
            <person name="Klein H.U."/>
            <person name="Dugas M."/>
            <person name="Shiraishi Y."/>
            <person name="Chiba K."/>
            <person name="Tanaka H."/>
            <person name="Miyano S."/>
            <person name="Yoshida K."/>
            <person name="Ogawa S."/>
            <person name="Mueller-Tidow C."/>
            <person name="Maciejewski J.P."/>
        </authorList>
    </citation>
    <scope>INVOLVEMENT IN MPLPF</scope>
    <scope>VARIANTS MPLPF THR-396 AND HIS-525</scope>
    <scope>CHARACTERIZATION OF VARIANT MPLPF HIS-525</scope>
    <scope>FUNCTION</scope>
    <scope>SUBUNIT</scope>
</reference>
<reference key="18">
    <citation type="journal article" date="2015" name="PLoS ONE">
        <title>Identification of Novel Proteins Co-Purifying with Cockayne Syndrome Group B (CSB) Reveals Potential Roles for CSB in RNA Metabolism and Chromatin Dynamics.</title>
        <authorList>
            <person name="Nicolai S."/>
            <person name="Filippi S."/>
            <person name="Caputo M."/>
            <person name="Cipak L."/>
            <person name="Gregan J."/>
            <person name="Ammerer G."/>
            <person name="Frontini M."/>
            <person name="Willems D."/>
            <person name="Prantera G."/>
            <person name="Balajee A.S."/>
            <person name="Proietti-De-Santis L."/>
        </authorList>
    </citation>
    <scope>INTERACTION WITH ERCC6</scope>
</reference>
<reference key="19">
    <citation type="journal article" date="2016" name="Blood">
        <title>Novel germ line DDX41 mutations define families with a lower age of MDS/AML onset and lymphoid malignancies.</title>
        <authorList>
            <person name="Lewinsohn M."/>
            <person name="Brown A.L."/>
            <person name="Weinel L.M."/>
            <person name="Phung C."/>
            <person name="Rafidi G."/>
            <person name="Lee M.K."/>
            <person name="Schreiber A.W."/>
            <person name="Feng J."/>
            <person name="Babic M."/>
            <person name="Chong C.E."/>
            <person name="Lee Y."/>
            <person name="Yong A."/>
            <person name="Suthers G.K."/>
            <person name="Poplawski N."/>
            <person name="Altree M."/>
            <person name="Phillips K."/>
            <person name="Jaensch L."/>
            <person name="Fine M."/>
            <person name="D'Andrea R.J."/>
            <person name="Lewis I.D."/>
            <person name="Medeiros B.C."/>
            <person name="Pollyea D.A."/>
            <person name="King M.C."/>
            <person name="Walsh T."/>
            <person name="Keel S."/>
            <person name="Shimamura A."/>
            <person name="Godley L.A."/>
            <person name="Hahn C.N."/>
            <person name="Churpek J.E."/>
            <person name="Scott H.S."/>
        </authorList>
    </citation>
    <scope>INVOLVEMENT IN MPLPF</scope>
    <scope>VARIANTS MPLPF TRP-164 AND HIS-525</scope>
    <scope>CHARACTERIZATION OF VARIANTS MPLPF TRP-164 AND HIS-525</scope>
    <scope>SUBCELLULAR LOCATION</scope>
</reference>
<reference key="20">
    <citation type="journal article" date="2017" name="Nat. Struct. Mol. Biol.">
        <title>Site-specific mapping of the human SUMO proteome reveals co-modification with phosphorylation.</title>
        <authorList>
            <person name="Hendriks I.A."/>
            <person name="Lyon D."/>
            <person name="Young C."/>
            <person name="Jensen L.J."/>
            <person name="Vertegaal A.C."/>
            <person name="Nielsen M.L."/>
        </authorList>
    </citation>
    <scope>SUMOYLATION [LARGE SCALE ANALYSIS] AT LYS-416 AND LYS-442</scope>
    <scope>IDENTIFICATION BY MASS SPECTROMETRY [LARGE SCALE ANALYSIS]</scope>
</reference>
<reference key="21">
    <citation type="journal article" date="2020" name="Nat. Commun.">
        <title>Mutations in FAM50A suggest that Armfield XLID syndrome is a spliceosomopathy.</title>
        <authorList>
            <person name="Lee Y.R."/>
            <person name="Khan K."/>
            <person name="Armfield-Uhas K."/>
            <person name="Srikanth S."/>
            <person name="Thompson N.A."/>
            <person name="Pardo M."/>
            <person name="Yu L."/>
            <person name="Norris J.W."/>
            <person name="Peng Y."/>
            <person name="Gripp K.W."/>
            <person name="Aleck K.A."/>
            <person name="Li C."/>
            <person name="Spence E."/>
            <person name="Choi T.I."/>
            <person name="Kwon S.J."/>
            <person name="Park H.M."/>
            <person name="Yu D."/>
            <person name="Do Heo W."/>
            <person name="Mooney M.R."/>
            <person name="Baig S.M."/>
            <person name="Wentzensen I.M."/>
            <person name="Telegrafi A."/>
            <person name="McWalter K."/>
            <person name="Moreland T."/>
            <person name="Roadhouse C."/>
            <person name="Ramsey K."/>
            <person name="Lyons M.J."/>
            <person name="Skinner C."/>
            <person name="Alexov E."/>
            <person name="Katsanis N."/>
            <person name="Stevenson R.E."/>
            <person name="Choudhary J.S."/>
            <person name="Adams D.J."/>
            <person name="Kim C.H."/>
            <person name="Davis E.E."/>
            <person name="Schwartz C.E."/>
        </authorList>
    </citation>
    <scope>INTERACTION WITH FAM50A</scope>
</reference>
<reference key="22">
    <citation type="journal article" date="2021" name="Oncol. Rep.">
        <title>DDX41 regulates the expression and alternative splicing of genes involved in tumorigenesis and immune response.</title>
        <authorList>
            <person name="Qin K."/>
            <person name="Jian D."/>
            <person name="Xue Y."/>
            <person name="Cheng Y."/>
            <person name="Zhang P."/>
            <person name="Wei Y."/>
            <person name="Zhang J."/>
            <person name="Xiong H."/>
            <person name="Zhang Y."/>
            <person name="Yuan X."/>
        </authorList>
    </citation>
    <scope>FUNCTION</scope>
</reference>
<reference key="23">
    <citation type="journal article" date="2021" name="Cell Stem Cell">
        <title>Germline DDX41 mutations cause ineffective hematopoiesis and myelodysplasia.</title>
        <authorList>
            <person name="Chlon T.M."/>
            <person name="Stepanchick E."/>
            <person name="Hershberger C.E."/>
            <person name="Daniels N.J."/>
            <person name="Hueneman K.M."/>
            <person name="Kuenzi Davis A."/>
            <person name="Choi K."/>
            <person name="Zheng Y."/>
            <person name="Gurnari C."/>
            <person name="Haferlach T."/>
            <person name="Padgett R.A."/>
            <person name="Maciejewski J.P."/>
            <person name="Starczynowski D.T."/>
        </authorList>
    </citation>
    <scope>FUNCTION</scope>
</reference>
<reference key="24">
    <citation type="journal article" date="2022" name="Cell Rep.">
        <title>DDX41 is required for cGAS-STING activation against DNA virus infection.</title>
        <authorList>
            <person name="Singh R.S."/>
            <person name="Vidhyasagar V."/>
            <person name="Yang S."/>
            <person name="Arna A.B."/>
            <person name="Yadav M."/>
            <person name="Aggarwal A."/>
            <person name="Aguilera A.N."/>
            <person name="Shinriki S."/>
            <person name="Bhanumathy K.K."/>
            <person name="Pandey K."/>
            <person name="Xu A."/>
            <person name="Rapin N."/>
            <person name="Bosch M."/>
            <person name="DeCoteau J."/>
            <person name="Xiang J."/>
            <person name="Vizeacoumar F.J."/>
            <person name="Zhou Y."/>
            <person name="Misra V."/>
            <person name="Matsui H."/>
            <person name="Ross S.R."/>
            <person name="Wu Y."/>
        </authorList>
    </citation>
    <scope>FUNCTION</scope>
    <scope>SUBCELLULAR LOCATION</scope>
    <scope>INTERACTION WITH CGAS</scope>
    <scope>MUTAGENESIS OF GLU-345</scope>
    <scope>ACETYLATION AT LYS-9</scope>
    <scope>CATALYTIC ACTIVITY</scope>
    <scope>CHARACTERIZATION OF VARIANT MPLPF HIS-525</scope>
</reference>
<reference key="25">
    <citation type="journal article" date="2022" name="Leukemia">
        <title>DDX41 coordinates RNA splicing and transcriptional elongation to prevent DNA replication stress in hematopoietic cells.</title>
        <authorList>
            <person name="Shinriki S."/>
            <person name="Hirayama M."/>
            <person name="Nagamachi A."/>
            <person name="Yokoyama A."/>
            <person name="Kawamura T."/>
            <person name="Kanai A."/>
            <person name="Kawai H."/>
            <person name="Iwakiri J."/>
            <person name="Liu R."/>
            <person name="Maeshiro M."/>
            <person name="Tungalag S."/>
            <person name="Tasaki M."/>
            <person name="Ueda M."/>
            <person name="Tomizawa K."/>
            <person name="Kataoka N."/>
            <person name="Ideue T."/>
            <person name="Suzuki Y."/>
            <person name="Asai K."/>
            <person name="Tani T."/>
            <person name="Inaba T."/>
            <person name="Matsui H."/>
        </authorList>
    </citation>
    <scope>FUNCTION</scope>
    <scope>INTERACTION WITH PRP19 AND CDC5L</scope>
</reference>
<reference key="26">
    <citation type="journal article" date="2023" name="Int. J. Hematol.">
        <title>Ribosome profiling analysis reveals the roles of DDX41 in translational regulation.</title>
        <authorList>
            <person name="Tungalag S."/>
            <person name="Shinriki S."/>
            <person name="Hirayama M."/>
            <person name="Nagamachi A."/>
            <person name="Kanai A."/>
            <person name="Inaba T."/>
            <person name="Matsui H."/>
        </authorList>
    </citation>
    <scope>FUNCTION</scope>
</reference>
<reference key="27">
    <citation type="journal article" date="2010" name="PLoS ONE">
        <title>Comparative structural analysis of human DEAD-box RNA helicases.</title>
        <authorList>
            <person name="Schutz P."/>
            <person name="Karlberg T."/>
            <person name="van den Berg S."/>
            <person name="Collins R."/>
            <person name="Lehtio L."/>
            <person name="Hogbom M."/>
            <person name="Holmberg-Schiavone L."/>
            <person name="Tempel W."/>
            <person name="Park H.W."/>
            <person name="Hammarstrom M."/>
            <person name="Moche M."/>
            <person name="Thorsell A.G."/>
            <person name="Schuler H."/>
        </authorList>
    </citation>
    <scope>X-RAY CRYSTALLOGRAPHY (2.6 ANGSTROMS) OF 402-569</scope>
</reference>
<proteinExistence type="evidence at protein level"/>
<sequence length="622" mass="69838">MEESEPERKRARTDEVPAGGSRSEAEDEDDEDYVPYVPLRQRRQLLLQKLLQRRRKGAAEEEQQDSGSEPRGDEDDIPLGPQSNVSLLDQHQHLKEKAEARKESAKEKQLKEEEKILESVAEGRALMSVKEMAKGITYDDPIKTSWTPPRYVLSMSEERHERVRKKYHILVEGDGIPPPIKSFKEMKFPAAILRGLKKKGIHHPTPIQIQGIPTILSGRDMIGIAFTGSGKTLVFTLPVIMFCLEQEKRLPFSKREGPYGLIICPSRELARQTHGILEYYCRLLQEDSSPLLRCALCIGGMSVKEQMETIRHGVHMMVATPGRLMDLLQKKMVSLDICRYLALDEADRMIDMGFEGDIRTIFSYFKGQRQTLLFSATMPKKIQNFAKSALVKPVTINVGRAGAASLDVIQEVEYVKEEAKMVYLLECLQKTPPPVLIFAEKKADVDAIHEYLLLKGVEAVAIHGGKDQEERTKAIEAFREGKKDVLVATDVASKGLDFPAIQHVINYDMPEEIENYVHRIGRTGRSGNTGIATTFINKACDESVLMDLKALLLEAKQKVPPVLQVLHCGDESMLDIGGERGCAFCGGLGHRITDCPKLEAMQTKQVSNIGRKDYLAHSSMDF</sequence>
<gene>
    <name type="primary">DDX41</name>
    <name type="synonym">ABS</name>
</gene>
<organism>
    <name type="scientific">Homo sapiens</name>
    <name type="common">Human</name>
    <dbReference type="NCBI Taxonomy" id="9606"/>
    <lineage>
        <taxon>Eukaryota</taxon>
        <taxon>Metazoa</taxon>
        <taxon>Chordata</taxon>
        <taxon>Craniata</taxon>
        <taxon>Vertebrata</taxon>
        <taxon>Euteleostomi</taxon>
        <taxon>Mammalia</taxon>
        <taxon>Eutheria</taxon>
        <taxon>Euarchontoglires</taxon>
        <taxon>Primates</taxon>
        <taxon>Haplorrhini</taxon>
        <taxon>Catarrhini</taxon>
        <taxon>Hominidae</taxon>
        <taxon>Homo</taxon>
    </lineage>
</organism>
<feature type="chain" id="PRO_0000054970" description="Probable ATP-dependent RNA helicase DDX41">
    <location>
        <begin position="1"/>
        <end position="622"/>
    </location>
</feature>
<feature type="domain" description="Helicase ATP-binding" evidence="2">
    <location>
        <begin position="212"/>
        <end position="396"/>
    </location>
</feature>
<feature type="domain" description="Helicase C-terminal" evidence="3">
    <location>
        <begin position="407"/>
        <end position="567"/>
    </location>
</feature>
<feature type="zinc finger region" description="CCHC-type">
    <location>
        <begin position="580"/>
        <end position="597"/>
    </location>
</feature>
<feature type="region of interest" description="Disordered" evidence="5">
    <location>
        <begin position="1"/>
        <end position="39"/>
    </location>
</feature>
<feature type="region of interest" description="Disordered" evidence="5">
    <location>
        <begin position="52"/>
        <end position="84"/>
    </location>
</feature>
<feature type="short sequence motif" description="Q motif" evidence="4">
    <location>
        <begin position="181"/>
        <end position="209"/>
    </location>
</feature>
<feature type="short sequence motif" description="DEAD box" evidence="2">
    <location>
        <begin position="344"/>
        <end position="347"/>
    </location>
</feature>
<feature type="compositionally biased region" description="Basic and acidic residues" evidence="5">
    <location>
        <begin position="1"/>
        <end position="15"/>
    </location>
</feature>
<feature type="binding site" evidence="2">
    <location>
        <begin position="225"/>
        <end position="232"/>
    </location>
    <ligand>
        <name>ATP</name>
        <dbReference type="ChEBI" id="CHEBI:30616"/>
    </ligand>
</feature>
<feature type="modified residue" description="Phosphoserine" evidence="22">
    <location>
        <position position="4"/>
    </location>
</feature>
<feature type="modified residue" description="N6-acetyllysine" evidence="15">
    <location>
        <position position="9"/>
    </location>
</feature>
<feature type="modified residue" description="Phosphoserine" evidence="19 20 22">
    <location>
        <position position="21"/>
    </location>
</feature>
<feature type="modified residue" description="Phosphoserine" evidence="19 20 21 22">
    <location>
        <position position="23"/>
    </location>
</feature>
<feature type="modified residue" description="Phosphotyrosine" evidence="1">
    <location>
        <position position="33"/>
    </location>
</feature>
<feature type="modified residue" description="Phosphotyrosine; by BTK" evidence="8">
    <location>
        <position position="414"/>
    </location>
</feature>
<feature type="cross-link" description="Glycyl lysine isopeptide (Lys-Gly) (interchain with G-Cter in ubiquitin)" evidence="7">
    <location>
        <position position="9"/>
    </location>
</feature>
<feature type="cross-link" description="Glycyl lysine isopeptide (Lys-Gly) (interchain with G-Cter in ubiquitin)" evidence="7">
    <location>
        <position position="115"/>
    </location>
</feature>
<feature type="cross-link" description="Glycyl lysine isopeptide (Lys-Gly) (interchain with G-Cter in SUMO2)" evidence="23">
    <location>
        <position position="416"/>
    </location>
</feature>
<feature type="cross-link" description="Glycyl lysine isopeptide (Lys-Gly) (interchain with G-Cter in SUMO2)" evidence="23">
    <location>
        <position position="442"/>
    </location>
</feature>
<feature type="sequence variant" id="VAR_076360" description="In MPLPF; uncertain significance; no effect on localization; dbSNP:rs142143752." evidence="11">
    <original>R</original>
    <variation>W</variation>
    <location>
        <position position="164"/>
    </location>
</feature>
<feature type="sequence variant" id="VAR_076361" description="In MPLPF; uncertain significance; dbSNP:rs747072227." evidence="9">
    <original>I</original>
    <variation>T</variation>
    <location>
        <position position="396"/>
    </location>
</feature>
<feature type="sequence variant" id="VAR_076362" description="In MPLPF; reduced unwinding activity while normal strand-annealing activity leading to higher cGAS activity; no effect on localization; changed interaction with spliceosomal complexes; dbSNP:rs869312828." evidence="9 11 15">
    <original>R</original>
    <variation>H</variation>
    <location>
        <position position="525"/>
    </location>
</feature>
<feature type="mutagenesis site" description="Complete loss of TRIM21-mediated ubiquitination; when associated with R-115." evidence="7">
    <original>K</original>
    <variation>R</variation>
    <location>
        <position position="9"/>
    </location>
</feature>
<feature type="mutagenesis site" description="Complete loss of TRIM21-mediated ubiquitination; when associated with R-9." evidence="7">
    <original>K</original>
    <variation>R</variation>
    <location>
        <position position="115"/>
    </location>
</feature>
<feature type="mutagenesis site" description="Complete loss of ATP-hydrolysis activity." evidence="15">
    <original>E</original>
    <variation>A</variation>
    <location>
        <position position="345"/>
    </location>
</feature>
<feature type="mutagenesis site" description="Strong loss of binding to dsDNA and STING1." evidence="8">
    <original>Y</original>
    <variation>F</variation>
    <location>
        <position position="364"/>
    </location>
</feature>
<feature type="mutagenesis site" description="Strong loss of binding to dsDNA and STING1." evidence="8">
    <original>Y</original>
    <variation>F</variation>
    <location>
        <position position="414"/>
    </location>
</feature>
<feature type="sequence conflict" description="In Ref. 1; AAF04150." evidence="18" ref="1">
    <original>PAGGSRSEAEDEDDEDYVPYVPLRQRR</original>
    <variation>LPEEAAPRRKMRTTRTTCPMCRYAAP</variation>
    <location>
        <begin position="17"/>
        <end position="43"/>
    </location>
</feature>
<feature type="sequence conflict" description="In Ref. 2; BAA91585." evidence="18" ref="2">
    <original>K</original>
    <variation>E</variation>
    <location>
        <position position="56"/>
    </location>
</feature>
<feature type="sequence conflict" description="In Ref. 2; BAB55355." evidence="18" ref="2">
    <original>Q</original>
    <variation>E</variation>
    <location>
        <position position="64"/>
    </location>
</feature>
<feature type="sequence conflict" description="In Ref. 2; BAB55355." evidence="18" ref="2">
    <original>K</original>
    <variation>E</variation>
    <location>
        <position position="165"/>
    </location>
</feature>
<feature type="sequence conflict" description="In Ref. 2; BAA91585." evidence="18" ref="2">
    <original>A</original>
    <variation>T</variation>
    <location>
        <position position="191"/>
    </location>
</feature>
<feature type="sequence conflict" description="In Ref. 2; BAA91585." evidence="18" ref="2">
    <original>M</original>
    <variation>T</variation>
    <location>
        <position position="352"/>
    </location>
</feature>
<feature type="sequence conflict" description="In Ref. 2; BAB55355." evidence="18" ref="2">
    <original>L</original>
    <variation>Q</variation>
    <location>
        <position position="552"/>
    </location>
</feature>
<feature type="sequence conflict" description="In Ref. 5; CAE46035." evidence="18" ref="5">
    <original>D</original>
    <variation>G</variation>
    <location>
        <position position="570"/>
    </location>
</feature>
<feature type="helix" evidence="26">
    <location>
        <begin position="159"/>
        <end position="166"/>
    </location>
</feature>
<feature type="strand" evidence="25">
    <location>
        <begin position="170"/>
        <end position="175"/>
    </location>
</feature>
<feature type="turn" evidence="25">
    <location>
        <begin position="183"/>
        <end position="187"/>
    </location>
</feature>
<feature type="helix" evidence="25">
    <location>
        <begin position="190"/>
        <end position="198"/>
    </location>
</feature>
<feature type="helix" evidence="25">
    <location>
        <begin position="206"/>
        <end position="216"/>
    </location>
</feature>
<feature type="strand" evidence="25">
    <location>
        <begin position="221"/>
        <end position="224"/>
    </location>
</feature>
<feature type="helix" evidence="25">
    <location>
        <begin position="231"/>
        <end position="249"/>
    </location>
</feature>
<feature type="strand" evidence="25">
    <location>
        <begin position="259"/>
        <end position="263"/>
    </location>
</feature>
<feature type="helix" evidence="25">
    <location>
        <begin position="267"/>
        <end position="286"/>
    </location>
</feature>
<feature type="strand" evidence="25">
    <location>
        <begin position="294"/>
        <end position="297"/>
    </location>
</feature>
<feature type="helix" evidence="25">
    <location>
        <begin position="303"/>
        <end position="311"/>
    </location>
</feature>
<feature type="strand" evidence="25">
    <location>
        <begin position="315"/>
        <end position="319"/>
    </location>
</feature>
<feature type="helix" evidence="25">
    <location>
        <begin position="321"/>
        <end position="329"/>
    </location>
</feature>
<feature type="strand" evidence="25">
    <location>
        <begin position="340"/>
        <end position="345"/>
    </location>
</feature>
<feature type="helix" evidence="25">
    <location>
        <begin position="346"/>
        <end position="351"/>
    </location>
</feature>
<feature type="turn" evidence="26">
    <location>
        <begin position="352"/>
        <end position="354"/>
    </location>
</feature>
<feature type="helix" evidence="25">
    <location>
        <begin position="355"/>
        <end position="362"/>
    </location>
</feature>
<feature type="strand" evidence="25">
    <location>
        <begin position="370"/>
        <end position="376"/>
    </location>
</feature>
<feature type="helix" evidence="25">
    <location>
        <begin position="380"/>
        <end position="389"/>
    </location>
</feature>
<feature type="strand" evidence="25">
    <location>
        <begin position="394"/>
        <end position="397"/>
    </location>
</feature>
<feature type="strand" evidence="24">
    <location>
        <begin position="408"/>
        <end position="414"/>
    </location>
</feature>
<feature type="helix" evidence="24">
    <location>
        <begin position="417"/>
        <end position="419"/>
    </location>
</feature>
<feature type="helix" evidence="24">
    <location>
        <begin position="420"/>
        <end position="428"/>
    </location>
</feature>
<feature type="strand" evidence="24">
    <location>
        <begin position="435"/>
        <end position="438"/>
    </location>
</feature>
<feature type="helix" evidence="24">
    <location>
        <begin position="442"/>
        <end position="455"/>
    </location>
</feature>
<feature type="strand" evidence="24">
    <location>
        <begin position="459"/>
        <end position="462"/>
    </location>
</feature>
<feature type="helix" evidence="24">
    <location>
        <begin position="468"/>
        <end position="480"/>
    </location>
</feature>
<feature type="strand" evidence="24">
    <location>
        <begin position="484"/>
        <end position="488"/>
    </location>
</feature>
<feature type="helix" evidence="24">
    <location>
        <begin position="490"/>
        <end position="493"/>
    </location>
</feature>
<feature type="strand" evidence="24">
    <location>
        <begin position="502"/>
        <end position="508"/>
    </location>
</feature>
<feature type="helix" evidence="24">
    <location>
        <begin position="513"/>
        <end position="520"/>
    </location>
</feature>
<feature type="strand" evidence="24">
    <location>
        <begin position="531"/>
        <end position="536"/>
    </location>
</feature>
<feature type="helix" evidence="24">
    <location>
        <begin position="542"/>
        <end position="554"/>
    </location>
</feature>
<feature type="helix" evidence="24">
    <location>
        <begin position="561"/>
        <end position="564"/>
    </location>
</feature>
<protein>
    <recommendedName>
        <fullName>Probable ATP-dependent RNA helicase DDX41</fullName>
        <ecNumber>3.6.4.13</ecNumber>
    </recommendedName>
    <alternativeName>
        <fullName>DEAD box protein 41</fullName>
    </alternativeName>
    <alternativeName>
        <fullName>DEAD box protein abstrakt homolog</fullName>
    </alternativeName>
</protein>
<accession>Q9UJV9</accession>
<accession>B2RDC8</accession>
<accession>Q96BK6</accession>
<accession>Q96K05</accession>
<accession>Q9NT96</accession>
<accession>Q9NW04</accession>
<evidence type="ECO:0000250" key="1">
    <source>
        <dbReference type="UniProtKB" id="Q91VN6"/>
    </source>
</evidence>
<evidence type="ECO:0000255" key="2">
    <source>
        <dbReference type="PROSITE-ProRule" id="PRU00541"/>
    </source>
</evidence>
<evidence type="ECO:0000255" key="3">
    <source>
        <dbReference type="PROSITE-ProRule" id="PRU00542"/>
    </source>
</evidence>
<evidence type="ECO:0000255" key="4">
    <source>
        <dbReference type="PROSITE-ProRule" id="PRU00552"/>
    </source>
</evidence>
<evidence type="ECO:0000256" key="5">
    <source>
        <dbReference type="SAM" id="MobiDB-lite"/>
    </source>
</evidence>
<evidence type="ECO:0000269" key="6">
    <source>
    </source>
</evidence>
<evidence type="ECO:0000269" key="7">
    <source>
    </source>
</evidence>
<evidence type="ECO:0000269" key="8">
    <source>
    </source>
</evidence>
<evidence type="ECO:0000269" key="9">
    <source>
    </source>
</evidence>
<evidence type="ECO:0000269" key="10">
    <source>
    </source>
</evidence>
<evidence type="ECO:0000269" key="11">
    <source>
    </source>
</evidence>
<evidence type="ECO:0000269" key="12">
    <source>
    </source>
</evidence>
<evidence type="ECO:0000269" key="13">
    <source>
    </source>
</evidence>
<evidence type="ECO:0000269" key="14">
    <source>
    </source>
</evidence>
<evidence type="ECO:0000269" key="15">
    <source>
    </source>
</evidence>
<evidence type="ECO:0000269" key="16">
    <source>
    </source>
</evidence>
<evidence type="ECO:0000269" key="17">
    <source>
    </source>
</evidence>
<evidence type="ECO:0000305" key="18"/>
<evidence type="ECO:0007744" key="19">
    <source>
    </source>
</evidence>
<evidence type="ECO:0007744" key="20">
    <source>
    </source>
</evidence>
<evidence type="ECO:0007744" key="21">
    <source>
    </source>
</evidence>
<evidence type="ECO:0007744" key="22">
    <source>
    </source>
</evidence>
<evidence type="ECO:0007744" key="23">
    <source>
    </source>
</evidence>
<evidence type="ECO:0007829" key="24">
    <source>
        <dbReference type="PDB" id="2P6N"/>
    </source>
</evidence>
<evidence type="ECO:0007829" key="25">
    <source>
        <dbReference type="PDB" id="5GVR"/>
    </source>
</evidence>
<evidence type="ECO:0007829" key="26">
    <source>
        <dbReference type="PDB" id="5H1Y"/>
    </source>
</evidence>
<dbReference type="EC" id="3.6.4.13"/>
<dbReference type="EMBL" id="AF195417">
    <property type="protein sequence ID" value="AAF04150.1"/>
    <property type="molecule type" value="mRNA"/>
</dbReference>
<dbReference type="EMBL" id="AK001255">
    <property type="protein sequence ID" value="BAA91585.1"/>
    <property type="molecule type" value="mRNA"/>
</dbReference>
<dbReference type="EMBL" id="AK027768">
    <property type="protein sequence ID" value="BAB55355.1"/>
    <property type="molecule type" value="mRNA"/>
</dbReference>
<dbReference type="EMBL" id="AK315491">
    <property type="protein sequence ID" value="BAG37875.1"/>
    <property type="molecule type" value="mRNA"/>
</dbReference>
<dbReference type="EMBL" id="CH471195">
    <property type="protein sequence ID" value="EAW84981.1"/>
    <property type="molecule type" value="Genomic_DNA"/>
</dbReference>
<dbReference type="EMBL" id="BC015476">
    <property type="protein sequence ID" value="AAH15476.1"/>
    <property type="molecule type" value="mRNA"/>
</dbReference>
<dbReference type="EMBL" id="AL137455">
    <property type="protein sequence ID" value="CAB70746.1"/>
    <property type="molecule type" value="mRNA"/>
</dbReference>
<dbReference type="EMBL" id="BX641072">
    <property type="protein sequence ID" value="CAE46035.1"/>
    <property type="status" value="ALT_SEQ"/>
    <property type="molecule type" value="mRNA"/>
</dbReference>
<dbReference type="CCDS" id="CCDS4427.1"/>
<dbReference type="PIR" id="T46269">
    <property type="entry name" value="T46269"/>
</dbReference>
<dbReference type="RefSeq" id="NP_001308661.1">
    <property type="nucleotide sequence ID" value="NM_001321732.1"/>
</dbReference>
<dbReference type="RefSeq" id="NP_001308759.1">
    <property type="nucleotide sequence ID" value="NM_001321830.1"/>
</dbReference>
<dbReference type="RefSeq" id="NP_057306.2">
    <property type="nucleotide sequence ID" value="NM_016222.3"/>
</dbReference>
<dbReference type="PDB" id="2P6N">
    <property type="method" value="X-ray"/>
    <property type="resolution" value="2.60 A"/>
    <property type="chains" value="A/B=402-569"/>
</dbReference>
<dbReference type="PDB" id="5GVR">
    <property type="method" value="X-ray"/>
    <property type="resolution" value="1.50 A"/>
    <property type="chains" value="A=169-402"/>
</dbReference>
<dbReference type="PDB" id="5GVS">
    <property type="method" value="X-ray"/>
    <property type="resolution" value="2.20 A"/>
    <property type="chains" value="A/B/C/D=169-399"/>
</dbReference>
<dbReference type="PDB" id="5H1Y">
    <property type="method" value="X-ray"/>
    <property type="resolution" value="2.26 A"/>
    <property type="chains" value="A/B=153-410"/>
</dbReference>
<dbReference type="PDB" id="8C6J">
    <property type="method" value="EM"/>
    <property type="resolution" value="2.80 A"/>
    <property type="chains" value="CD=1-622"/>
</dbReference>
<dbReference type="PDBsum" id="2P6N"/>
<dbReference type="PDBsum" id="5GVR"/>
<dbReference type="PDBsum" id="5GVS"/>
<dbReference type="PDBsum" id="5H1Y"/>
<dbReference type="PDBsum" id="8C6J"/>
<dbReference type="EMDB" id="EMD-16452"/>
<dbReference type="SMR" id="Q9UJV9"/>
<dbReference type="BioGRID" id="119534">
    <property type="interactions" value="160"/>
</dbReference>
<dbReference type="CORUM" id="Q9UJV9"/>
<dbReference type="FunCoup" id="Q9UJV9">
    <property type="interactions" value="3984"/>
</dbReference>
<dbReference type="IntAct" id="Q9UJV9">
    <property type="interactions" value="198"/>
</dbReference>
<dbReference type="MINT" id="Q9UJV9"/>
<dbReference type="STRING" id="9606.ENSP00000330349"/>
<dbReference type="CarbonylDB" id="Q9UJV9"/>
<dbReference type="GlyGen" id="Q9UJV9">
    <property type="glycosylation" value="1 site, 1 O-linked glycan (1 site)"/>
</dbReference>
<dbReference type="iPTMnet" id="Q9UJV9"/>
<dbReference type="PhosphoSitePlus" id="Q9UJV9"/>
<dbReference type="SwissPalm" id="Q9UJV9"/>
<dbReference type="BioMuta" id="DDX41"/>
<dbReference type="DMDM" id="20532370"/>
<dbReference type="jPOST" id="Q9UJV9"/>
<dbReference type="MassIVE" id="Q9UJV9"/>
<dbReference type="PaxDb" id="9606-ENSP00000422753"/>
<dbReference type="PeptideAtlas" id="Q9UJV9"/>
<dbReference type="ProteomicsDB" id="84666"/>
<dbReference type="Pumba" id="Q9UJV9"/>
<dbReference type="Antibodypedia" id="17469">
    <property type="antibodies" value="299 antibodies from 30 providers"/>
</dbReference>
<dbReference type="DNASU" id="51428"/>
<dbReference type="Ensembl" id="ENST00000330503.12">
    <property type="protein sequence ID" value="ENSP00000330349.8"/>
    <property type="gene ID" value="ENSG00000183258.12"/>
</dbReference>
<dbReference type="GeneID" id="51428"/>
<dbReference type="KEGG" id="hsa:51428"/>
<dbReference type="MANE-Select" id="ENST00000330503.12">
    <property type="protein sequence ID" value="ENSP00000330349.8"/>
    <property type="RefSeq nucleotide sequence ID" value="NM_016222.4"/>
    <property type="RefSeq protein sequence ID" value="NP_057306.2"/>
</dbReference>
<dbReference type="UCSC" id="uc003mho.4">
    <property type="organism name" value="human"/>
</dbReference>
<dbReference type="AGR" id="HGNC:18674"/>
<dbReference type="CTD" id="51428"/>
<dbReference type="DisGeNET" id="51428"/>
<dbReference type="GeneCards" id="DDX41"/>
<dbReference type="GeneReviews" id="DDX41"/>
<dbReference type="HGNC" id="HGNC:18674">
    <property type="gene designation" value="DDX41"/>
</dbReference>
<dbReference type="HPA" id="ENSG00000183258">
    <property type="expression patterns" value="Low tissue specificity"/>
</dbReference>
<dbReference type="MalaCards" id="DDX41"/>
<dbReference type="MIM" id="608170">
    <property type="type" value="gene"/>
</dbReference>
<dbReference type="MIM" id="616871">
    <property type="type" value="phenotype"/>
</dbReference>
<dbReference type="neXtProt" id="NX_Q9UJV9"/>
<dbReference type="OpenTargets" id="ENSG00000183258"/>
<dbReference type="Orphanet" id="488647">
    <property type="disease" value="DDX41-related hematologic malignancy predisposition syndrome"/>
</dbReference>
<dbReference type="PharmGKB" id="PA134908862"/>
<dbReference type="VEuPathDB" id="HostDB:ENSG00000183258"/>
<dbReference type="eggNOG" id="KOG0341">
    <property type="taxonomic scope" value="Eukaryota"/>
</dbReference>
<dbReference type="GeneTree" id="ENSGT00940000156333"/>
<dbReference type="HOGENOM" id="CLU_003041_16_5_1"/>
<dbReference type="InParanoid" id="Q9UJV9"/>
<dbReference type="OMA" id="FKTIWTL"/>
<dbReference type="OrthoDB" id="196131at2759"/>
<dbReference type="PAN-GO" id="Q9UJV9">
    <property type="GO annotations" value="4 GO annotations based on evolutionary models"/>
</dbReference>
<dbReference type="PhylomeDB" id="Q9UJV9"/>
<dbReference type="TreeFam" id="TF300340"/>
<dbReference type="PathwayCommons" id="Q9UJV9"/>
<dbReference type="Reactome" id="R-HSA-1834941">
    <property type="pathway name" value="STING mediated induction of host immune responses"/>
</dbReference>
<dbReference type="Reactome" id="R-HSA-3134975">
    <property type="pathway name" value="Regulation of innate immune responses to cytosolic DNA"/>
</dbReference>
<dbReference type="Reactome" id="R-HSA-3270619">
    <property type="pathway name" value="IRF3-mediated induction of type I IFN"/>
</dbReference>
<dbReference type="Reactome" id="R-HSA-72163">
    <property type="pathway name" value="mRNA Splicing - Major Pathway"/>
</dbReference>
<dbReference type="SignaLink" id="Q9UJV9"/>
<dbReference type="SIGNOR" id="Q9UJV9"/>
<dbReference type="BioGRID-ORCS" id="51428">
    <property type="hits" value="769 hits in 1163 CRISPR screens"/>
</dbReference>
<dbReference type="CD-CODE" id="232F8A39">
    <property type="entry name" value="P-body"/>
</dbReference>
<dbReference type="CD-CODE" id="91857CE7">
    <property type="entry name" value="Nucleolus"/>
</dbReference>
<dbReference type="ChiTaRS" id="DDX41">
    <property type="organism name" value="human"/>
</dbReference>
<dbReference type="EvolutionaryTrace" id="Q9UJV9"/>
<dbReference type="GeneWiki" id="DDX41"/>
<dbReference type="GenomeRNAi" id="51428"/>
<dbReference type="Pharos" id="Q9UJV9">
    <property type="development level" value="Tbio"/>
</dbReference>
<dbReference type="PRO" id="PR:Q9UJV9"/>
<dbReference type="Proteomes" id="UP000005640">
    <property type="component" value="Chromosome 5"/>
</dbReference>
<dbReference type="RNAct" id="Q9UJV9">
    <property type="molecule type" value="protein"/>
</dbReference>
<dbReference type="Bgee" id="ENSG00000183258">
    <property type="expression patterns" value="Expressed in granulocyte and 186 other cell types or tissues"/>
</dbReference>
<dbReference type="ExpressionAtlas" id="Q9UJV9">
    <property type="expression patterns" value="baseline and differential"/>
</dbReference>
<dbReference type="GO" id="GO:0071013">
    <property type="term" value="C:catalytic step 2 spliceosome"/>
    <property type="evidence" value="ECO:0000314"/>
    <property type="project" value="UniProtKB"/>
</dbReference>
<dbReference type="GO" id="GO:0005829">
    <property type="term" value="C:cytosol"/>
    <property type="evidence" value="ECO:0000314"/>
    <property type="project" value="UniProt"/>
</dbReference>
<dbReference type="GO" id="GO:0005783">
    <property type="term" value="C:endoplasmic reticulum"/>
    <property type="evidence" value="ECO:0007669"/>
    <property type="project" value="Ensembl"/>
</dbReference>
<dbReference type="GO" id="GO:0016020">
    <property type="term" value="C:membrane"/>
    <property type="evidence" value="ECO:0007005"/>
    <property type="project" value="UniProtKB"/>
</dbReference>
<dbReference type="GO" id="GO:0005654">
    <property type="term" value="C:nucleoplasm"/>
    <property type="evidence" value="ECO:0000304"/>
    <property type="project" value="Reactome"/>
</dbReference>
<dbReference type="GO" id="GO:0005634">
    <property type="term" value="C:nucleus"/>
    <property type="evidence" value="ECO:0000314"/>
    <property type="project" value="UniProtKB"/>
</dbReference>
<dbReference type="GO" id="GO:0005681">
    <property type="term" value="C:spliceosomal complex"/>
    <property type="evidence" value="ECO:0000318"/>
    <property type="project" value="GO_Central"/>
</dbReference>
<dbReference type="GO" id="GO:0005524">
    <property type="term" value="F:ATP binding"/>
    <property type="evidence" value="ECO:0007669"/>
    <property type="project" value="UniProtKB-KW"/>
</dbReference>
<dbReference type="GO" id="GO:0016887">
    <property type="term" value="F:ATP hydrolysis activity"/>
    <property type="evidence" value="ECO:0007669"/>
    <property type="project" value="RHEA"/>
</dbReference>
<dbReference type="GO" id="GO:0003677">
    <property type="term" value="F:DNA binding"/>
    <property type="evidence" value="ECO:0007669"/>
    <property type="project" value="Ensembl"/>
</dbReference>
<dbReference type="GO" id="GO:0003729">
    <property type="term" value="F:mRNA binding"/>
    <property type="evidence" value="ECO:0000318"/>
    <property type="project" value="GO_Central"/>
</dbReference>
<dbReference type="GO" id="GO:0003723">
    <property type="term" value="F:RNA binding"/>
    <property type="evidence" value="ECO:0007005"/>
    <property type="project" value="UniProtKB"/>
</dbReference>
<dbReference type="GO" id="GO:0003724">
    <property type="term" value="F:RNA helicase activity"/>
    <property type="evidence" value="ECO:0000314"/>
    <property type="project" value="UniProt"/>
</dbReference>
<dbReference type="GO" id="GO:0008270">
    <property type="term" value="F:zinc ion binding"/>
    <property type="evidence" value="ECO:0007669"/>
    <property type="project" value="UniProtKB-KW"/>
</dbReference>
<dbReference type="GO" id="GO:0006915">
    <property type="term" value="P:apoptotic process"/>
    <property type="evidence" value="ECO:0000304"/>
    <property type="project" value="ProtInc"/>
</dbReference>
<dbReference type="GO" id="GO:0030154">
    <property type="term" value="P:cell differentiation"/>
    <property type="evidence" value="ECO:0000315"/>
    <property type="project" value="UniProtKB"/>
</dbReference>
<dbReference type="GO" id="GO:0008283">
    <property type="term" value="P:cell population proliferation"/>
    <property type="evidence" value="ECO:0000315"/>
    <property type="project" value="UniProtKB"/>
</dbReference>
<dbReference type="GO" id="GO:0035458">
    <property type="term" value="P:cellular response to interferon-beta"/>
    <property type="evidence" value="ECO:0007669"/>
    <property type="project" value="Ensembl"/>
</dbReference>
<dbReference type="GO" id="GO:0140896">
    <property type="term" value="P:cGAS/STING signaling pathway"/>
    <property type="evidence" value="ECO:0000314"/>
    <property type="project" value="UniProt"/>
</dbReference>
<dbReference type="GO" id="GO:0051607">
    <property type="term" value="P:defense response to virus"/>
    <property type="evidence" value="ECO:0007669"/>
    <property type="project" value="Ensembl"/>
</dbReference>
<dbReference type="GO" id="GO:0000398">
    <property type="term" value="P:mRNA splicing, via spliceosome"/>
    <property type="evidence" value="ECO:0000315"/>
    <property type="project" value="UniProtKB"/>
</dbReference>
<dbReference type="GO" id="GO:0045944">
    <property type="term" value="P:positive regulation of transcription by RNA polymerase II"/>
    <property type="evidence" value="ECO:0007669"/>
    <property type="project" value="Ensembl"/>
</dbReference>
<dbReference type="CDD" id="cd17951">
    <property type="entry name" value="DEADc_DDX41"/>
    <property type="match status" value="1"/>
</dbReference>
<dbReference type="CDD" id="cd18787">
    <property type="entry name" value="SF2_C_DEAD"/>
    <property type="match status" value="1"/>
</dbReference>
<dbReference type="FunFam" id="3.40.50.300:FF:000449">
    <property type="entry name" value="Probable ATP-dependent RNA helicase DDX41"/>
    <property type="match status" value="1"/>
</dbReference>
<dbReference type="FunFam" id="3.40.50.300:FF:000657">
    <property type="entry name" value="Probable ATP-dependent RNA helicase DDX41"/>
    <property type="match status" value="1"/>
</dbReference>
<dbReference type="Gene3D" id="3.40.50.300">
    <property type="entry name" value="P-loop containing nucleotide triphosphate hydrolases"/>
    <property type="match status" value="2"/>
</dbReference>
<dbReference type="InterPro" id="IPR011545">
    <property type="entry name" value="DEAD/DEAH_box_helicase_dom"/>
</dbReference>
<dbReference type="InterPro" id="IPR044113">
    <property type="entry name" value="DEADc_DDX41"/>
</dbReference>
<dbReference type="InterPro" id="IPR014001">
    <property type="entry name" value="Helicase_ATP-bd"/>
</dbReference>
<dbReference type="InterPro" id="IPR001650">
    <property type="entry name" value="Helicase_C-like"/>
</dbReference>
<dbReference type="InterPro" id="IPR027417">
    <property type="entry name" value="P-loop_NTPase"/>
</dbReference>
<dbReference type="InterPro" id="IPR014014">
    <property type="entry name" value="RNA_helicase_DEAD_Q_motif"/>
</dbReference>
<dbReference type="PANTHER" id="PTHR47958">
    <property type="entry name" value="ATP-DEPENDENT RNA HELICASE DBP3"/>
    <property type="match status" value="1"/>
</dbReference>
<dbReference type="Pfam" id="PF00270">
    <property type="entry name" value="DEAD"/>
    <property type="match status" value="1"/>
</dbReference>
<dbReference type="Pfam" id="PF00271">
    <property type="entry name" value="Helicase_C"/>
    <property type="match status" value="1"/>
</dbReference>
<dbReference type="SMART" id="SM00487">
    <property type="entry name" value="DEXDc"/>
    <property type="match status" value="1"/>
</dbReference>
<dbReference type="SMART" id="SM00490">
    <property type="entry name" value="HELICc"/>
    <property type="match status" value="1"/>
</dbReference>
<dbReference type="SUPFAM" id="SSF52540">
    <property type="entry name" value="P-loop containing nucleoside triphosphate hydrolases"/>
    <property type="match status" value="2"/>
</dbReference>
<dbReference type="PROSITE" id="PS51192">
    <property type="entry name" value="HELICASE_ATP_BIND_1"/>
    <property type="match status" value="1"/>
</dbReference>
<dbReference type="PROSITE" id="PS51194">
    <property type="entry name" value="HELICASE_CTER"/>
    <property type="match status" value="1"/>
</dbReference>
<dbReference type="PROSITE" id="PS51195">
    <property type="entry name" value="Q_MOTIF"/>
    <property type="match status" value="1"/>
</dbReference>
<name>DDX41_HUMAN</name>
<comment type="function">
    <text evidence="1 7 8 9 13 14 15 16 17">Multifunctional protein that participates in many aspects of cellular RNA metabolism. Plays pivotal roles in innate immune sensing and hematopoietic homeostasis (PubMed:34473945). Recognizes foreign or self-nucleic acids generated during microbial infection, thereby initiating anti-pathogen responses (PubMed:23222971). Mechanistically, phosphorylation by BTK allows binding to dsDNA leading to interaction with STING1 (PubMed:25704810). Modulates the homeostasis of dsDNA through its ATP-dependent DNA-unwinding activity and ATP-independent strand-annealing activity (PubMed:35613581). In turn, induces STING1-mediated type I interferon and cytokine responses to DNA and DNA viruses (PubMed:35613581). Selectively modulates the transcription of certain immunity-associated genes by regulating their alternative splicing (PubMed:33650667). Binds to RNA (R)-loops, structures consisting of DNA/RNA hybrids and a displaced strand of DNA that occur during transcription, and prevents their accumulation, thereby maintaining genome stability (PubMed:36229594). Also participates in pre-mRNA splicing, translational regulation and snoRNA processing, which is essential for ribosome biogenesis (PubMed:36229594, PubMed:36780110).</text>
</comment>
<comment type="catalytic activity">
    <reaction evidence="15">
        <text>ATP + H2O = ADP + phosphate + H(+)</text>
        <dbReference type="Rhea" id="RHEA:13065"/>
        <dbReference type="ChEBI" id="CHEBI:15377"/>
        <dbReference type="ChEBI" id="CHEBI:15378"/>
        <dbReference type="ChEBI" id="CHEBI:30616"/>
        <dbReference type="ChEBI" id="CHEBI:43474"/>
        <dbReference type="ChEBI" id="CHEBI:456216"/>
        <dbReference type="EC" id="3.6.4.13"/>
    </reaction>
</comment>
<comment type="subunit">
    <text evidence="6 8 9 10 12 15 16">Identified in the spliceosome C complex (PubMed:11991638, PubMed:25920683). Interacts with ERCC6 (PubMed:26030138). Interacts with FAM50A (PubMed:32703943). Interacts with STING1 (PubMed:25704810). Interacts with CGAS (PubMed:35613581). Interacts with several spliceosomes components such as PRP19 or CDC5L (PubMed:36229594).</text>
</comment>
<comment type="interaction">
    <interactant intactId="EBI-1046350">
        <id>Q9UJV9</id>
    </interactant>
    <interactant intactId="EBI-4401674">
        <id>Q96BJ3</id>
        <label>AIDA</label>
    </interactant>
    <organismsDiffer>false</organismsDiffer>
    <experiments>3</experiments>
</comment>
<comment type="interaction">
    <interactant intactId="EBI-1046350">
        <id>Q9UJV9</id>
    </interactant>
    <interactant intactId="EBI-739624">
        <id>Q8NHQ1</id>
        <label>CEP70</label>
    </interactant>
    <organismsDiffer>false</organismsDiffer>
    <experiments>3</experiments>
</comment>
<comment type="interaction">
    <interactant intactId="EBI-1046350">
        <id>Q9UJV9</id>
    </interactant>
    <interactant intactId="EBI-466029">
        <id>P42858</id>
        <label>HTT</label>
    </interactant>
    <organismsDiffer>false</organismsDiffer>
    <experiments>6</experiments>
</comment>
<comment type="interaction">
    <interactant intactId="EBI-1046350">
        <id>Q9UJV9</id>
    </interactant>
    <interactant intactId="EBI-721539">
        <id>Q8N5F7</id>
        <label>NKAP</label>
    </interactant>
    <organismsDiffer>false</organismsDiffer>
    <experiments>5</experiments>
</comment>
<comment type="interaction">
    <interactant intactId="EBI-1046350">
        <id>Q9UJV9</id>
    </interactant>
    <interactant intactId="EBI-11423380">
        <id>Q5M9Q1</id>
        <label>NKAPL</label>
    </interactant>
    <organismsDiffer>false</organismsDiffer>
    <experiments>5</experiments>
</comment>
<comment type="interaction">
    <interactant intactId="EBI-1046350">
        <id>Q9UJV9</id>
    </interactant>
    <interactant intactId="EBI-747107">
        <id>Q8IUQ4</id>
        <label>SIAH1</label>
    </interactant>
    <organismsDiffer>false</organismsDiffer>
    <experiments>3</experiments>
</comment>
<comment type="subcellular location">
    <subcellularLocation>
        <location evidence="11 15">Nucleus</location>
    </subcellularLocation>
    <subcellularLocation>
        <location evidence="7 8 15">Cytoplasm</location>
    </subcellularLocation>
    <text evidence="15">Predominantly present in the nucleus and traffics to the cytoplasm, specifically in the perinuclear region, after DNA stimulation.</text>
</comment>
<comment type="PTM">
    <text evidence="15">Acetylation at Lys-9 regulates the nuclear/cytoplasmic localization.</text>
</comment>
<comment type="PTM">
    <text evidence="8">Phosphorylated by BTK; phosphorylation induces binding to dsDNA and STING1.</text>
</comment>
<comment type="PTM">
    <text evidence="7">'Lys-48'-linked ubiquitinated and degraded by TRIM21 leading to negative regulation of the innate immune response to intracellular dsDNA.</text>
</comment>
<comment type="disease" evidence="9 11 15">
    <disease id="DI-04687">
        <name>Myeloproliferative/lymphoproliferative neoplasms, familial</name>
        <acronym>MPLPF</acronym>
        <description>A familial cancer predisposition syndrome with incomplete penetrance, characterized by increased susceptibility to myeloid neoplasms and rarely to lymphoid malignancies. MPLPF inheritance is autosomal dominant.</description>
        <dbReference type="MIM" id="616871"/>
    </disease>
    <text>Disease susceptibility is associated with variants affecting the gene represented in this entry.</text>
</comment>
<comment type="similarity">
    <text evidence="18">Belongs to the DEAD box helicase family. DDX41 subfamily.</text>
</comment>
<comment type="sequence caution" evidence="18">
    <conflict type="miscellaneous discrepancy">
        <sequence resource="EMBL-CDS" id="CAE46035"/>
    </conflict>
    <text>Intron retention.</text>
</comment>